<keyword id="KW-0963">Cytoplasm</keyword>
<keyword id="KW-0489">Methyltransferase</keyword>
<keyword id="KW-0698">rRNA processing</keyword>
<keyword id="KW-0949">S-adenosyl-L-methionine</keyword>
<keyword id="KW-0808">Transferase</keyword>
<accession>A6T6Q1</accession>
<name>RLMF_KLEP7</name>
<dbReference type="EC" id="2.1.1.181" evidence="1"/>
<dbReference type="EMBL" id="CP000647">
    <property type="protein sequence ID" value="ABR76272.1"/>
    <property type="molecule type" value="Genomic_DNA"/>
</dbReference>
<dbReference type="RefSeq" id="WP_002895831.1">
    <property type="nucleotide sequence ID" value="NC_009648.1"/>
</dbReference>
<dbReference type="SMR" id="A6T6Q1"/>
<dbReference type="STRING" id="272620.KPN_00836"/>
<dbReference type="PaxDb" id="272620-KPN_00836"/>
<dbReference type="EnsemblBacteria" id="ABR76272">
    <property type="protein sequence ID" value="ABR76272"/>
    <property type="gene ID" value="KPN_00836"/>
</dbReference>
<dbReference type="KEGG" id="kpn:KPN_00836"/>
<dbReference type="HOGENOM" id="CLU_027534_3_0_6"/>
<dbReference type="Proteomes" id="UP000000265">
    <property type="component" value="Chromosome"/>
</dbReference>
<dbReference type="GO" id="GO:0005737">
    <property type="term" value="C:cytoplasm"/>
    <property type="evidence" value="ECO:0007669"/>
    <property type="project" value="UniProtKB-SubCell"/>
</dbReference>
<dbReference type="GO" id="GO:0052907">
    <property type="term" value="F:23S rRNA (adenine(1618)-N(6))-methyltransferase activity"/>
    <property type="evidence" value="ECO:0007669"/>
    <property type="project" value="UniProtKB-EC"/>
</dbReference>
<dbReference type="GO" id="GO:0070475">
    <property type="term" value="P:rRNA base methylation"/>
    <property type="evidence" value="ECO:0007669"/>
    <property type="project" value="TreeGrafter"/>
</dbReference>
<dbReference type="CDD" id="cd02440">
    <property type="entry name" value="AdoMet_MTases"/>
    <property type="match status" value="1"/>
</dbReference>
<dbReference type="FunFam" id="3.40.50.150:FF:000045">
    <property type="entry name" value="Ribosomal RNA large subunit methyltransferase F"/>
    <property type="match status" value="1"/>
</dbReference>
<dbReference type="Gene3D" id="3.40.50.150">
    <property type="entry name" value="Vaccinia Virus protein VP39"/>
    <property type="match status" value="1"/>
</dbReference>
<dbReference type="HAMAP" id="MF_01848">
    <property type="entry name" value="23SrRNA_methyltr_F"/>
    <property type="match status" value="1"/>
</dbReference>
<dbReference type="InterPro" id="IPR010286">
    <property type="entry name" value="METTL16/RlmF"/>
</dbReference>
<dbReference type="InterPro" id="IPR016909">
    <property type="entry name" value="rRNA_lsu_MeTfrase_F"/>
</dbReference>
<dbReference type="InterPro" id="IPR029063">
    <property type="entry name" value="SAM-dependent_MTases_sf"/>
</dbReference>
<dbReference type="NCBIfam" id="NF008725">
    <property type="entry name" value="PRK11727.1"/>
    <property type="match status" value="1"/>
</dbReference>
<dbReference type="PANTHER" id="PTHR13393:SF0">
    <property type="entry name" value="RNA N6-ADENOSINE-METHYLTRANSFERASE METTL16"/>
    <property type="match status" value="1"/>
</dbReference>
<dbReference type="PANTHER" id="PTHR13393">
    <property type="entry name" value="SAM-DEPENDENT METHYLTRANSFERASE"/>
    <property type="match status" value="1"/>
</dbReference>
<dbReference type="Pfam" id="PF05971">
    <property type="entry name" value="Methyltransf_10"/>
    <property type="match status" value="1"/>
</dbReference>
<dbReference type="PIRSF" id="PIRSF029038">
    <property type="entry name" value="Mtase_YbiN_prd"/>
    <property type="match status" value="1"/>
</dbReference>
<dbReference type="SUPFAM" id="SSF53335">
    <property type="entry name" value="S-adenosyl-L-methionine-dependent methyltransferases"/>
    <property type="match status" value="1"/>
</dbReference>
<organism>
    <name type="scientific">Klebsiella pneumoniae subsp. pneumoniae (strain ATCC 700721 / MGH 78578)</name>
    <dbReference type="NCBI Taxonomy" id="272620"/>
    <lineage>
        <taxon>Bacteria</taxon>
        <taxon>Pseudomonadati</taxon>
        <taxon>Pseudomonadota</taxon>
        <taxon>Gammaproteobacteria</taxon>
        <taxon>Enterobacterales</taxon>
        <taxon>Enterobacteriaceae</taxon>
        <taxon>Klebsiella/Raoultella group</taxon>
        <taxon>Klebsiella</taxon>
        <taxon>Klebsiella pneumoniae complex</taxon>
    </lineage>
</organism>
<feature type="chain" id="PRO_0000349919" description="Ribosomal RNA large subunit methyltransferase F">
    <location>
        <begin position="1"/>
        <end position="304"/>
    </location>
</feature>
<protein>
    <recommendedName>
        <fullName evidence="1">Ribosomal RNA large subunit methyltransferase F</fullName>
        <ecNumber evidence="1">2.1.1.181</ecNumber>
    </recommendedName>
    <alternativeName>
        <fullName evidence="1">23S rRNA mA1618 methyltransferase</fullName>
    </alternativeName>
    <alternativeName>
        <fullName evidence="1">rRNA adenine N-6-methyltransferase</fullName>
    </alternativeName>
</protein>
<sequence>MKAQKPGLHPRNRHHQRYDLPALCQAHPDLQGYITLNPLGEQTIDFANPQAVKALNKALLAHFYAVKHWDIPDGFLCPPVPGRADYIHHLADLLAGDSGEVPKDATILDIGTGANLIYPLIGAHEYGWRFTGSEINPQAFASAQAIINGNPGLTRQIRLRRQKESQAIFHGVIHKNETYDATLCNPPFHDSAESARAGGERKRRNLGLGAESGLNFGGQQQELWCEGGEVAFISQMIRESQAFARQVKWFTSLVSRGDNLPPLYRLLTEVGAVKVVKKEMAQGQKQSRFIAWSFMDDAKRRRPF</sequence>
<proteinExistence type="inferred from homology"/>
<reference key="1">
    <citation type="submission" date="2006-09" db="EMBL/GenBank/DDBJ databases">
        <authorList>
            <consortium name="The Klebsiella pneumonia Genome Sequencing Project"/>
            <person name="McClelland M."/>
            <person name="Sanderson E.K."/>
            <person name="Spieth J."/>
            <person name="Clifton W.S."/>
            <person name="Latreille P."/>
            <person name="Sabo A."/>
            <person name="Pepin K."/>
            <person name="Bhonagiri V."/>
            <person name="Porwollik S."/>
            <person name="Ali J."/>
            <person name="Wilson R.K."/>
        </authorList>
    </citation>
    <scope>NUCLEOTIDE SEQUENCE [LARGE SCALE GENOMIC DNA]</scope>
    <source>
        <strain>ATCC 700721 / MGH 78578</strain>
    </source>
</reference>
<gene>
    <name evidence="1" type="primary">rlmF</name>
    <name type="ordered locus">KPN78578_08110</name>
    <name type="ORF">KPN_00836</name>
</gene>
<comment type="function">
    <text evidence="1">Specifically methylates the adenine in position 1618 of 23S rRNA.</text>
</comment>
<comment type="catalytic activity">
    <reaction evidence="1">
        <text>adenosine(1618) in 23S rRNA + S-adenosyl-L-methionine = N(6)-methyladenosine(1618) in 23S rRNA + S-adenosyl-L-homocysteine + H(+)</text>
        <dbReference type="Rhea" id="RHEA:16497"/>
        <dbReference type="Rhea" id="RHEA-COMP:10229"/>
        <dbReference type="Rhea" id="RHEA-COMP:10231"/>
        <dbReference type="ChEBI" id="CHEBI:15378"/>
        <dbReference type="ChEBI" id="CHEBI:57856"/>
        <dbReference type="ChEBI" id="CHEBI:59789"/>
        <dbReference type="ChEBI" id="CHEBI:74411"/>
        <dbReference type="ChEBI" id="CHEBI:74449"/>
        <dbReference type="EC" id="2.1.1.181"/>
    </reaction>
</comment>
<comment type="subcellular location">
    <subcellularLocation>
        <location evidence="1">Cytoplasm</location>
    </subcellularLocation>
</comment>
<comment type="similarity">
    <text evidence="1">Belongs to the methyltransferase superfamily. METTL16/RlmF family.</text>
</comment>
<evidence type="ECO:0000255" key="1">
    <source>
        <dbReference type="HAMAP-Rule" id="MF_01848"/>
    </source>
</evidence>